<evidence type="ECO:0000255" key="1">
    <source>
        <dbReference type="HAMAP-Rule" id="MF_01692"/>
    </source>
</evidence>
<gene>
    <name type="ordered locus">OB1403</name>
</gene>
<accession>Q8ERA3</accession>
<feature type="chain" id="PRO_0000376777" description="N-acetyldiaminopimelate deacetylase">
    <location>
        <begin position="1"/>
        <end position="371"/>
    </location>
</feature>
<feature type="active site" evidence="1">
    <location>
        <position position="68"/>
    </location>
</feature>
<feature type="active site" description="Proton acceptor" evidence="1">
    <location>
        <position position="127"/>
    </location>
</feature>
<protein>
    <recommendedName>
        <fullName evidence="1">N-acetyldiaminopimelate deacetylase</fullName>
        <ecNumber evidence="1">3.5.1.47</ecNumber>
    </recommendedName>
</protein>
<dbReference type="EC" id="3.5.1.47" evidence="1"/>
<dbReference type="EMBL" id="BA000028">
    <property type="protein sequence ID" value="BAC13359.1"/>
    <property type="molecule type" value="Genomic_DNA"/>
</dbReference>
<dbReference type="RefSeq" id="WP_011065809.1">
    <property type="nucleotide sequence ID" value="NC_004193.1"/>
</dbReference>
<dbReference type="SMR" id="Q8ERA3"/>
<dbReference type="STRING" id="221109.gene:10733643"/>
<dbReference type="MEROPS" id="M20.A27"/>
<dbReference type="KEGG" id="oih:OB1403"/>
<dbReference type="eggNOG" id="COG1473">
    <property type="taxonomic scope" value="Bacteria"/>
</dbReference>
<dbReference type="HOGENOM" id="CLU_023257_0_1_9"/>
<dbReference type="OrthoDB" id="9776731at2"/>
<dbReference type="PhylomeDB" id="Q8ERA3"/>
<dbReference type="UniPathway" id="UPA00034">
    <property type="reaction ID" value="UER00024"/>
</dbReference>
<dbReference type="Proteomes" id="UP000000822">
    <property type="component" value="Chromosome"/>
</dbReference>
<dbReference type="GO" id="GO:0050118">
    <property type="term" value="F:N-acetyldiaminopimelate deacetylase activity"/>
    <property type="evidence" value="ECO:0007669"/>
    <property type="project" value="UniProtKB-UniRule"/>
</dbReference>
<dbReference type="GO" id="GO:0019877">
    <property type="term" value="P:diaminopimelate biosynthetic process"/>
    <property type="evidence" value="ECO:0007669"/>
    <property type="project" value="UniProtKB-UniRule"/>
</dbReference>
<dbReference type="GO" id="GO:0009089">
    <property type="term" value="P:lysine biosynthetic process via diaminopimelate"/>
    <property type="evidence" value="ECO:0007669"/>
    <property type="project" value="UniProtKB-UniRule"/>
</dbReference>
<dbReference type="CDD" id="cd05670">
    <property type="entry name" value="M20_Acy1_YkuR-like"/>
    <property type="match status" value="1"/>
</dbReference>
<dbReference type="FunFam" id="3.30.70.360:FF:000001">
    <property type="entry name" value="N-acetyldiaminopimelate deacetylase"/>
    <property type="match status" value="1"/>
</dbReference>
<dbReference type="Gene3D" id="3.30.70.360">
    <property type="match status" value="1"/>
</dbReference>
<dbReference type="Gene3D" id="3.40.630.10">
    <property type="entry name" value="Zn peptidases"/>
    <property type="match status" value="1"/>
</dbReference>
<dbReference type="HAMAP" id="MF_01692">
    <property type="entry name" value="DapEL"/>
    <property type="match status" value="1"/>
</dbReference>
<dbReference type="InterPro" id="IPR023905">
    <property type="entry name" value="AcetylDAP_deacetylase"/>
</dbReference>
<dbReference type="InterPro" id="IPR017439">
    <property type="entry name" value="Amidohydrolase"/>
</dbReference>
<dbReference type="InterPro" id="IPR036264">
    <property type="entry name" value="Bact_exopeptidase_dim_dom"/>
</dbReference>
<dbReference type="InterPro" id="IPR002933">
    <property type="entry name" value="Peptidase_M20"/>
</dbReference>
<dbReference type="InterPro" id="IPR011650">
    <property type="entry name" value="Peptidase_M20_dimer"/>
</dbReference>
<dbReference type="NCBIfam" id="TIGR01891">
    <property type="entry name" value="amidohydrolases"/>
    <property type="match status" value="1"/>
</dbReference>
<dbReference type="PANTHER" id="PTHR11014:SF98">
    <property type="entry name" value="N-ACETYLDIAMINOPIMELATE DEACETYLASE"/>
    <property type="match status" value="1"/>
</dbReference>
<dbReference type="PANTHER" id="PTHR11014">
    <property type="entry name" value="PEPTIDASE M20 FAMILY MEMBER"/>
    <property type="match status" value="1"/>
</dbReference>
<dbReference type="Pfam" id="PF07687">
    <property type="entry name" value="M20_dimer"/>
    <property type="match status" value="1"/>
</dbReference>
<dbReference type="Pfam" id="PF01546">
    <property type="entry name" value="Peptidase_M20"/>
    <property type="match status" value="1"/>
</dbReference>
<dbReference type="PIRSF" id="PIRSF005962">
    <property type="entry name" value="Pept_M20D_amidohydro"/>
    <property type="match status" value="1"/>
</dbReference>
<dbReference type="SUPFAM" id="SSF55031">
    <property type="entry name" value="Bacterial exopeptidase dimerisation domain"/>
    <property type="match status" value="1"/>
</dbReference>
<dbReference type="SUPFAM" id="SSF53187">
    <property type="entry name" value="Zn-dependent exopeptidases"/>
    <property type="match status" value="1"/>
</dbReference>
<comment type="function">
    <text evidence="1">Catalyzes the conversion of N-acetyl-diaminopimelate to diaminopimelate and acetate.</text>
</comment>
<comment type="catalytic activity">
    <reaction evidence="1">
        <text>N-acetyl-(2S,6S)-2,6-diaminopimelate + H2O = (2S,6S)-2,6-diaminopimelate + acetate</text>
        <dbReference type="Rhea" id="RHEA:20405"/>
        <dbReference type="ChEBI" id="CHEBI:15377"/>
        <dbReference type="ChEBI" id="CHEBI:30089"/>
        <dbReference type="ChEBI" id="CHEBI:57609"/>
        <dbReference type="ChEBI" id="CHEBI:58767"/>
        <dbReference type="EC" id="3.5.1.47"/>
    </reaction>
</comment>
<comment type="pathway">
    <text evidence="1">Amino-acid biosynthesis; L-lysine biosynthesis via DAP pathway; LL-2,6-diaminopimelate from (S)-tetrahydrodipicolinate (acetylase route): step 3/3.</text>
</comment>
<comment type="similarity">
    <text evidence="1">Belongs to the peptidase M20A family. N-acetyldiaminopimelate deacetylase subfamily.</text>
</comment>
<organism>
    <name type="scientific">Oceanobacillus iheyensis (strain DSM 14371 / CIP 107618 / JCM 11309 / KCTC 3954 / HTE831)</name>
    <dbReference type="NCBI Taxonomy" id="221109"/>
    <lineage>
        <taxon>Bacteria</taxon>
        <taxon>Bacillati</taxon>
        <taxon>Bacillota</taxon>
        <taxon>Bacilli</taxon>
        <taxon>Bacillales</taxon>
        <taxon>Bacillaceae</taxon>
        <taxon>Oceanobacillus</taxon>
    </lineage>
</organism>
<sequence length="371" mass="41214">MMLQLEQIRRDLHQIPELGFQEFKTQAYLLERINEIATENVEIKKWSTGILVYVHGKSPARKIGFRADIDGLPILEQTNLPYASLHEGRMHACGHDLHMTIALGALEKLIQDPINDDVIFVFQPAEEGPGGAKPMLESEEFQQWKPDMMFALHIAPELPVGTVSSKAGLLFANTSELFIDFEGVGGHAAYPHLTKDMTVAASNFVVQLQQIVSRGLNPLDGSVITIGKMESGYVQNAIAETARLEGTIRSTDADAIDMIKSKLNRLMKGFEISYDCTIKVDYGANYYQVVNDATYVQQFENVINQTQTITYQQADAAMTGEDFGDMLKEIPGFMFWLGVDSSYGLHNARLNPKEEAIDVGVNAVISMITSF</sequence>
<proteinExistence type="inferred from homology"/>
<name>DAPEL_OCEIH</name>
<keyword id="KW-0028">Amino-acid biosynthesis</keyword>
<keyword id="KW-0220">Diaminopimelate biosynthesis</keyword>
<keyword id="KW-0378">Hydrolase</keyword>
<keyword id="KW-0457">Lysine biosynthesis</keyword>
<keyword id="KW-1185">Reference proteome</keyword>
<reference key="1">
    <citation type="journal article" date="2002" name="Nucleic Acids Res.">
        <title>Genome sequence of Oceanobacillus iheyensis isolated from the Iheya Ridge and its unexpected adaptive capabilities to extreme environments.</title>
        <authorList>
            <person name="Takami H."/>
            <person name="Takaki Y."/>
            <person name="Uchiyama I."/>
        </authorList>
    </citation>
    <scope>NUCLEOTIDE SEQUENCE [LARGE SCALE GENOMIC DNA]</scope>
    <source>
        <strain>DSM 14371 / CIP 107618 / JCM 11309 / KCTC 3954 / HTE831</strain>
    </source>
</reference>